<organism>
    <name type="scientific">Schizosaccharomyces pombe (strain 972 / ATCC 24843)</name>
    <name type="common">Fission yeast</name>
    <dbReference type="NCBI Taxonomy" id="284812"/>
    <lineage>
        <taxon>Eukaryota</taxon>
        <taxon>Fungi</taxon>
        <taxon>Dikarya</taxon>
        <taxon>Ascomycota</taxon>
        <taxon>Taphrinomycotina</taxon>
        <taxon>Schizosaccharomycetes</taxon>
        <taxon>Schizosaccharomycetales</taxon>
        <taxon>Schizosaccharomycetaceae</taxon>
        <taxon>Schizosaccharomyces</taxon>
    </lineage>
</organism>
<sequence length="112" mass="12870">MAQRVTYRRRLAYNTRSNRTRIIKTPGNNIRYLHIKKLGTIPRCGDTGVPLQGIPALRPREFARLSHNKKTVQRAYGGCLSANAVKDRIVRAFLIEEQKIVKQKLKQLSSQK</sequence>
<gene>
    <name type="primary">rpl3401</name>
    <name type="synonym">rpl34</name>
    <name type="synonym">rpl34a</name>
    <name type="ORF">SPAC23A1.08c</name>
</gene>
<dbReference type="EMBL" id="CU329670">
    <property type="protein sequence ID" value="CAA16982.1"/>
    <property type="molecule type" value="Genomic_DNA"/>
</dbReference>
<dbReference type="PIR" id="T38228">
    <property type="entry name" value="T38228"/>
</dbReference>
<dbReference type="RefSeq" id="NP_594438.1">
    <property type="nucleotide sequence ID" value="NM_001019867.2"/>
</dbReference>
<dbReference type="PDB" id="8ESQ">
    <property type="method" value="EM"/>
    <property type="resolution" value="2.80 A"/>
    <property type="chains" value="g=1-112"/>
</dbReference>
<dbReference type="PDB" id="8ESR">
    <property type="method" value="EM"/>
    <property type="resolution" value="3.20 A"/>
    <property type="chains" value="g=1-112"/>
</dbReference>
<dbReference type="PDB" id="8ETC">
    <property type="method" value="EM"/>
    <property type="resolution" value="3.10 A"/>
    <property type="chains" value="g=1-112"/>
</dbReference>
<dbReference type="PDB" id="8ETG">
    <property type="method" value="EM"/>
    <property type="resolution" value="3.40 A"/>
    <property type="chains" value="g=1-112"/>
</dbReference>
<dbReference type="PDB" id="8EUG">
    <property type="method" value="EM"/>
    <property type="resolution" value="2.80 A"/>
    <property type="chains" value="g=1-112"/>
</dbReference>
<dbReference type="PDB" id="8EUI">
    <property type="method" value="EM"/>
    <property type="resolution" value="3.10 A"/>
    <property type="chains" value="g=1-112"/>
</dbReference>
<dbReference type="PDBsum" id="8ESQ"/>
<dbReference type="PDBsum" id="8ESR"/>
<dbReference type="PDBsum" id="8ETC"/>
<dbReference type="PDBsum" id="8ETG"/>
<dbReference type="PDBsum" id="8EUG"/>
<dbReference type="PDBsum" id="8EUI"/>
<dbReference type="SMR" id="O42846"/>
<dbReference type="BioGRID" id="278473">
    <property type="interactions" value="5"/>
</dbReference>
<dbReference type="FunCoup" id="O42846">
    <property type="interactions" value="497"/>
</dbReference>
<dbReference type="STRING" id="284812.O42846"/>
<dbReference type="iPTMnet" id="O42846"/>
<dbReference type="PaxDb" id="4896-SPAC23A1.08c.1"/>
<dbReference type="EnsemblFungi" id="SPAC23A1.08c.1">
    <property type="protein sequence ID" value="SPAC23A1.08c.1:pep"/>
    <property type="gene ID" value="SPAC23A1.08c"/>
</dbReference>
<dbReference type="GeneID" id="2541989"/>
<dbReference type="KEGG" id="spo:2541989"/>
<dbReference type="PomBase" id="SPAC23A1.08c">
    <property type="gene designation" value="rpl3401"/>
</dbReference>
<dbReference type="VEuPathDB" id="FungiDB:SPAC23A1.08c"/>
<dbReference type="eggNOG" id="KOG1790">
    <property type="taxonomic scope" value="Eukaryota"/>
</dbReference>
<dbReference type="HOGENOM" id="CLU_118652_1_1_1"/>
<dbReference type="InParanoid" id="O42846"/>
<dbReference type="OMA" id="RCHKCVR"/>
<dbReference type="PhylomeDB" id="O42846"/>
<dbReference type="PRO" id="PR:O42846"/>
<dbReference type="Proteomes" id="UP000002485">
    <property type="component" value="Chromosome I"/>
</dbReference>
<dbReference type="GO" id="GO:0005829">
    <property type="term" value="C:cytosol"/>
    <property type="evidence" value="ECO:0007005"/>
    <property type="project" value="PomBase"/>
</dbReference>
<dbReference type="GO" id="GO:0022625">
    <property type="term" value="C:cytosolic large ribosomal subunit"/>
    <property type="evidence" value="ECO:0000318"/>
    <property type="project" value="GO_Central"/>
</dbReference>
<dbReference type="GO" id="GO:0030684">
    <property type="term" value="C:preribosome"/>
    <property type="evidence" value="ECO:0000314"/>
    <property type="project" value="PomBase"/>
</dbReference>
<dbReference type="GO" id="GO:0003735">
    <property type="term" value="F:structural constituent of ribosome"/>
    <property type="evidence" value="ECO:0000318"/>
    <property type="project" value="GO_Central"/>
</dbReference>
<dbReference type="GO" id="GO:0002181">
    <property type="term" value="P:cytoplasmic translation"/>
    <property type="evidence" value="ECO:0000266"/>
    <property type="project" value="PomBase"/>
</dbReference>
<dbReference type="GO" id="GO:0042254">
    <property type="term" value="P:ribosome biogenesis"/>
    <property type="evidence" value="ECO:0000318"/>
    <property type="project" value="GO_Central"/>
</dbReference>
<dbReference type="Gene3D" id="6.20.340.10">
    <property type="match status" value="1"/>
</dbReference>
<dbReference type="Gene3D" id="6.20.370.70">
    <property type="match status" value="1"/>
</dbReference>
<dbReference type="InterPro" id="IPR008195">
    <property type="entry name" value="Ribosomal_eL34"/>
</dbReference>
<dbReference type="InterPro" id="IPR038562">
    <property type="entry name" value="Ribosomal_eL34_C_sf"/>
</dbReference>
<dbReference type="InterPro" id="IPR018065">
    <property type="entry name" value="Ribosomal_eL34_CS"/>
</dbReference>
<dbReference type="PANTHER" id="PTHR46595">
    <property type="entry name" value="60S RIBOSOMAL PROTEIN L34"/>
    <property type="match status" value="1"/>
</dbReference>
<dbReference type="Pfam" id="PF01199">
    <property type="entry name" value="Ribosomal_L34e"/>
    <property type="match status" value="1"/>
</dbReference>
<dbReference type="PRINTS" id="PR01250">
    <property type="entry name" value="RIBOSOMALL34"/>
</dbReference>
<dbReference type="PROSITE" id="PS01145">
    <property type="entry name" value="RIBOSOMAL_L34E"/>
    <property type="match status" value="1"/>
</dbReference>
<reference key="1">
    <citation type="journal article" date="2002" name="Nature">
        <title>The genome sequence of Schizosaccharomyces pombe.</title>
        <authorList>
            <person name="Wood V."/>
            <person name="Gwilliam R."/>
            <person name="Rajandream M.A."/>
            <person name="Lyne M.H."/>
            <person name="Lyne R."/>
            <person name="Stewart A."/>
            <person name="Sgouros J.G."/>
            <person name="Peat N."/>
            <person name="Hayles J."/>
            <person name="Baker S.G."/>
            <person name="Basham D."/>
            <person name="Bowman S."/>
            <person name="Brooks K."/>
            <person name="Brown D."/>
            <person name="Brown S."/>
            <person name="Chillingworth T."/>
            <person name="Churcher C.M."/>
            <person name="Collins M."/>
            <person name="Connor R."/>
            <person name="Cronin A."/>
            <person name="Davis P."/>
            <person name="Feltwell T."/>
            <person name="Fraser A."/>
            <person name="Gentles S."/>
            <person name="Goble A."/>
            <person name="Hamlin N."/>
            <person name="Harris D.E."/>
            <person name="Hidalgo J."/>
            <person name="Hodgson G."/>
            <person name="Holroyd S."/>
            <person name="Hornsby T."/>
            <person name="Howarth S."/>
            <person name="Huckle E.J."/>
            <person name="Hunt S."/>
            <person name="Jagels K."/>
            <person name="James K.D."/>
            <person name="Jones L."/>
            <person name="Jones M."/>
            <person name="Leather S."/>
            <person name="McDonald S."/>
            <person name="McLean J."/>
            <person name="Mooney P."/>
            <person name="Moule S."/>
            <person name="Mungall K.L."/>
            <person name="Murphy L.D."/>
            <person name="Niblett D."/>
            <person name="Odell C."/>
            <person name="Oliver K."/>
            <person name="O'Neil S."/>
            <person name="Pearson D."/>
            <person name="Quail M.A."/>
            <person name="Rabbinowitsch E."/>
            <person name="Rutherford K.M."/>
            <person name="Rutter S."/>
            <person name="Saunders D."/>
            <person name="Seeger K."/>
            <person name="Sharp S."/>
            <person name="Skelton J."/>
            <person name="Simmonds M.N."/>
            <person name="Squares R."/>
            <person name="Squares S."/>
            <person name="Stevens K."/>
            <person name="Taylor K."/>
            <person name="Taylor R.G."/>
            <person name="Tivey A."/>
            <person name="Walsh S.V."/>
            <person name="Warren T."/>
            <person name="Whitehead S."/>
            <person name="Woodward J.R."/>
            <person name="Volckaert G."/>
            <person name="Aert R."/>
            <person name="Robben J."/>
            <person name="Grymonprez B."/>
            <person name="Weltjens I."/>
            <person name="Vanstreels E."/>
            <person name="Rieger M."/>
            <person name="Schaefer M."/>
            <person name="Mueller-Auer S."/>
            <person name="Gabel C."/>
            <person name="Fuchs M."/>
            <person name="Duesterhoeft A."/>
            <person name="Fritzc C."/>
            <person name="Holzer E."/>
            <person name="Moestl D."/>
            <person name="Hilbert H."/>
            <person name="Borzym K."/>
            <person name="Langer I."/>
            <person name="Beck A."/>
            <person name="Lehrach H."/>
            <person name="Reinhardt R."/>
            <person name="Pohl T.M."/>
            <person name="Eger P."/>
            <person name="Zimmermann W."/>
            <person name="Wedler H."/>
            <person name="Wambutt R."/>
            <person name="Purnelle B."/>
            <person name="Goffeau A."/>
            <person name="Cadieu E."/>
            <person name="Dreano S."/>
            <person name="Gloux S."/>
            <person name="Lelaure V."/>
            <person name="Mottier S."/>
            <person name="Galibert F."/>
            <person name="Aves S.J."/>
            <person name="Xiang Z."/>
            <person name="Hunt C."/>
            <person name="Moore K."/>
            <person name="Hurst S.M."/>
            <person name="Lucas M."/>
            <person name="Rochet M."/>
            <person name="Gaillardin C."/>
            <person name="Tallada V.A."/>
            <person name="Garzon A."/>
            <person name="Thode G."/>
            <person name="Daga R.R."/>
            <person name="Cruzado L."/>
            <person name="Jimenez J."/>
            <person name="Sanchez M."/>
            <person name="del Rey F."/>
            <person name="Benito J."/>
            <person name="Dominguez A."/>
            <person name="Revuelta J.L."/>
            <person name="Moreno S."/>
            <person name="Armstrong J."/>
            <person name="Forsburg S.L."/>
            <person name="Cerutti L."/>
            <person name="Lowe T."/>
            <person name="McCombie W.R."/>
            <person name="Paulsen I."/>
            <person name="Potashkin J."/>
            <person name="Shpakovski G.V."/>
            <person name="Ussery D."/>
            <person name="Barrell B.G."/>
            <person name="Nurse P."/>
        </authorList>
    </citation>
    <scope>NUCLEOTIDE SEQUENCE [LARGE SCALE GENOMIC DNA]</scope>
    <source>
        <strain>972 / ATCC 24843</strain>
    </source>
</reference>
<reference key="2">
    <citation type="journal article" date="2006" name="Nat. Biotechnol.">
        <title>ORFeome cloning and global analysis of protein localization in the fission yeast Schizosaccharomyces pombe.</title>
        <authorList>
            <person name="Matsuyama A."/>
            <person name="Arai R."/>
            <person name="Yashiroda Y."/>
            <person name="Shirai A."/>
            <person name="Kamata A."/>
            <person name="Sekido S."/>
            <person name="Kobayashi Y."/>
            <person name="Hashimoto A."/>
            <person name="Hamamoto M."/>
            <person name="Hiraoka Y."/>
            <person name="Horinouchi S."/>
            <person name="Yoshida M."/>
        </authorList>
    </citation>
    <scope>SUBCELLULAR LOCATION [LARGE SCALE ANALYSIS]</scope>
</reference>
<proteinExistence type="evidence at protein level"/>
<protein>
    <recommendedName>
        <fullName evidence="3">Large ribosomal subunit protein eL34A</fullName>
    </recommendedName>
    <alternativeName>
        <fullName>60S ribosomal protein L34-A</fullName>
    </alternativeName>
</protein>
<accession>O42846</accession>
<evidence type="ECO:0000250" key="1">
    <source>
        <dbReference type="UniProtKB" id="P87262"/>
    </source>
</evidence>
<evidence type="ECO:0000269" key="2">
    <source>
    </source>
</evidence>
<evidence type="ECO:0000305" key="3"/>
<evidence type="ECO:0007829" key="4">
    <source>
        <dbReference type="PDB" id="8ETC"/>
    </source>
</evidence>
<comment type="function">
    <text evidence="1">Component of the ribosome, a large ribonucleoprotein complex responsible for the synthesis of proteins in the cell. The small ribosomal subunit (SSU) binds messenger RNAs (mRNAs) and translates the encoded message by selecting cognate aminoacyl-transfer RNA (tRNA) molecules. The large subunit (LSU) contains the ribosomal catalytic site termed the peptidyl transferase center (PTC), which catalyzes the formation of peptide bonds, thereby polymerizing the amino acids delivered by tRNAs into a polypeptide chain. The nascent polypeptides leave the ribosome through a tunnel in the LSU and interact with protein factors that function in enzymatic processing, targeting, and the membrane insertion of nascent chains at the exit of the ribosomal tunnel.</text>
</comment>
<comment type="subunit">
    <text evidence="1">Component of the large ribosomal subunit (LSU). Mature yeast ribosomes consist of a small (40S) and a large (60S) subunit. The 40S small subunit contains 1 molecule of ribosomal RNA (18S rRNA) and at least 33 different proteins. The large 60S subunit contains 3 rRNA molecules (25S, 5.8S and 5S rRNA) and at least 46 different proteins.</text>
</comment>
<comment type="subcellular location">
    <subcellularLocation>
        <location evidence="2">Cytoplasm</location>
    </subcellularLocation>
</comment>
<comment type="miscellaneous">
    <text>There are 2 genes for eL34 in S.pombe.</text>
</comment>
<comment type="similarity">
    <text evidence="3">Belongs to the eukaryotic ribosomal protein eL34 family.</text>
</comment>
<keyword id="KW-0002">3D-structure</keyword>
<keyword id="KW-0963">Cytoplasm</keyword>
<keyword id="KW-1185">Reference proteome</keyword>
<keyword id="KW-0687">Ribonucleoprotein</keyword>
<keyword id="KW-0689">Ribosomal protein</keyword>
<feature type="chain" id="PRO_0000131843" description="Large ribosomal subunit protein eL34A">
    <location>
        <begin position="1"/>
        <end position="112"/>
    </location>
</feature>
<feature type="strand" evidence="4">
    <location>
        <begin position="8"/>
        <end position="10"/>
    </location>
</feature>
<feature type="strand" evidence="4">
    <location>
        <begin position="21"/>
        <end position="24"/>
    </location>
</feature>
<feature type="strand" evidence="4">
    <location>
        <begin position="30"/>
        <end position="33"/>
    </location>
</feature>
<feature type="turn" evidence="4">
    <location>
        <begin position="45"/>
        <end position="47"/>
    </location>
</feature>
<feature type="strand" evidence="4">
    <location>
        <begin position="52"/>
        <end position="54"/>
    </location>
</feature>
<feature type="helix" evidence="4">
    <location>
        <begin position="59"/>
        <end position="62"/>
    </location>
</feature>
<feature type="helix" evidence="4">
    <location>
        <begin position="67"/>
        <end position="70"/>
    </location>
</feature>
<feature type="turn" evidence="4">
    <location>
        <begin position="75"/>
        <end position="79"/>
    </location>
</feature>
<feature type="helix" evidence="4">
    <location>
        <begin position="82"/>
        <end position="106"/>
    </location>
</feature>
<name>RL34A_SCHPO</name>